<organism>
    <name type="scientific">Synechocystis sp. (strain ATCC 27184 / PCC 6803 / Kazusa)</name>
    <dbReference type="NCBI Taxonomy" id="1111708"/>
    <lineage>
        <taxon>Bacteria</taxon>
        <taxon>Bacillati</taxon>
        <taxon>Cyanobacteriota</taxon>
        <taxon>Cyanophyceae</taxon>
        <taxon>Synechococcales</taxon>
        <taxon>Merismopediaceae</taxon>
        <taxon>Synechocystis</taxon>
    </lineage>
</organism>
<reference key="1">
    <citation type="journal article" date="1996" name="DNA Res.">
        <title>Sequence analysis of the genome of the unicellular cyanobacterium Synechocystis sp. strain PCC6803. II. Sequence determination of the entire genome and assignment of potential protein-coding regions.</title>
        <authorList>
            <person name="Kaneko T."/>
            <person name="Sato S."/>
            <person name="Kotani H."/>
            <person name="Tanaka A."/>
            <person name="Asamizu E."/>
            <person name="Nakamura Y."/>
            <person name="Miyajima N."/>
            <person name="Hirosawa M."/>
            <person name="Sugiura M."/>
            <person name="Sasamoto S."/>
            <person name="Kimura T."/>
            <person name="Hosouchi T."/>
            <person name="Matsuno A."/>
            <person name="Muraki A."/>
            <person name="Nakazaki N."/>
            <person name="Naruo K."/>
            <person name="Okumura S."/>
            <person name="Shimpo S."/>
            <person name="Takeuchi C."/>
            <person name="Wada T."/>
            <person name="Watanabe A."/>
            <person name="Yamada M."/>
            <person name="Yasuda M."/>
            <person name="Tabata S."/>
        </authorList>
    </citation>
    <scope>NUCLEOTIDE SEQUENCE [LARGE SCALE GENOMIC DNA]</scope>
    <source>
        <strain>ATCC 27184 / PCC 6803 / Kazusa</strain>
    </source>
</reference>
<gene>
    <name type="ordered locus">slr1847</name>
</gene>
<accession>P73057</accession>
<protein>
    <recommendedName>
        <fullName evidence="1">Nucleoid-associated protein slr1847</fullName>
    </recommendedName>
</protein>
<dbReference type="EMBL" id="BA000022">
    <property type="protein sequence ID" value="BAA17079.1"/>
    <property type="molecule type" value="Genomic_DNA"/>
</dbReference>
<dbReference type="PIR" id="S75165">
    <property type="entry name" value="S75165"/>
</dbReference>
<dbReference type="SMR" id="P73057"/>
<dbReference type="IntAct" id="P73057">
    <property type="interactions" value="5"/>
</dbReference>
<dbReference type="STRING" id="1148.gene:10497940"/>
<dbReference type="PaxDb" id="1148-1652155"/>
<dbReference type="EnsemblBacteria" id="BAA17079">
    <property type="protein sequence ID" value="BAA17079"/>
    <property type="gene ID" value="BAA17079"/>
</dbReference>
<dbReference type="KEGG" id="syn:slr1847"/>
<dbReference type="eggNOG" id="COG0718">
    <property type="taxonomic scope" value="Bacteria"/>
</dbReference>
<dbReference type="InParanoid" id="P73057"/>
<dbReference type="PhylomeDB" id="P73057"/>
<dbReference type="Proteomes" id="UP000001425">
    <property type="component" value="Chromosome"/>
</dbReference>
<dbReference type="GO" id="GO:0043590">
    <property type="term" value="C:bacterial nucleoid"/>
    <property type="evidence" value="ECO:0007669"/>
    <property type="project" value="UniProtKB-UniRule"/>
</dbReference>
<dbReference type="GO" id="GO:0005829">
    <property type="term" value="C:cytosol"/>
    <property type="evidence" value="ECO:0000318"/>
    <property type="project" value="GO_Central"/>
</dbReference>
<dbReference type="GO" id="GO:0003677">
    <property type="term" value="F:DNA binding"/>
    <property type="evidence" value="ECO:0000318"/>
    <property type="project" value="GO_Central"/>
</dbReference>
<dbReference type="Gene3D" id="3.30.1310.10">
    <property type="entry name" value="Nucleoid-associated protein YbaB-like domain"/>
    <property type="match status" value="1"/>
</dbReference>
<dbReference type="HAMAP" id="MF_00274">
    <property type="entry name" value="DNA_YbaB_EbfC"/>
    <property type="match status" value="1"/>
</dbReference>
<dbReference type="InterPro" id="IPR036894">
    <property type="entry name" value="YbaB-like_sf"/>
</dbReference>
<dbReference type="InterPro" id="IPR004401">
    <property type="entry name" value="YbaB/EbfC"/>
</dbReference>
<dbReference type="NCBIfam" id="TIGR00103">
    <property type="entry name" value="DNA_YbaB_EbfC"/>
    <property type="match status" value="1"/>
</dbReference>
<dbReference type="PANTHER" id="PTHR33449">
    <property type="entry name" value="NUCLEOID-ASSOCIATED PROTEIN YBAB"/>
    <property type="match status" value="1"/>
</dbReference>
<dbReference type="PANTHER" id="PTHR33449:SF1">
    <property type="entry name" value="NUCLEOID-ASSOCIATED PROTEIN YBAB"/>
    <property type="match status" value="1"/>
</dbReference>
<dbReference type="Pfam" id="PF02575">
    <property type="entry name" value="YbaB_DNA_bd"/>
    <property type="match status" value="1"/>
</dbReference>
<dbReference type="PIRSF" id="PIRSF004555">
    <property type="entry name" value="UCP004555"/>
    <property type="match status" value="1"/>
</dbReference>
<dbReference type="SUPFAM" id="SSF82607">
    <property type="entry name" value="YbaB-like"/>
    <property type="match status" value="1"/>
</dbReference>
<feature type="chain" id="PRO_0000170457" description="Nucleoid-associated protein slr1847">
    <location>
        <begin position="1"/>
        <end position="114"/>
    </location>
</feature>
<keyword id="KW-0963">Cytoplasm</keyword>
<keyword id="KW-0238">DNA-binding</keyword>
<keyword id="KW-1185">Reference proteome</keyword>
<proteinExistence type="inferred from homology"/>
<evidence type="ECO:0000255" key="1">
    <source>
        <dbReference type="HAMAP-Rule" id="MF_00274"/>
    </source>
</evidence>
<sequence>MAQGKGFGFGLGKIKELQEAFQKAQQVQEGAKVLQEELERMEIPGKSADGLVTVLMSGNQEPLSIEIDPSALEKGAEGLSASVTEAMKAAYAESTETMRSKMEELTSGLNLPGM</sequence>
<comment type="function">
    <text evidence="1">Binds to DNA and alters its conformation. May be involved in regulation of gene expression, nucleoid organization and DNA protection.</text>
</comment>
<comment type="subunit">
    <text evidence="1">Homodimer.</text>
</comment>
<comment type="subcellular location">
    <subcellularLocation>
        <location evidence="1">Cytoplasm</location>
        <location evidence="1">Nucleoid</location>
    </subcellularLocation>
</comment>
<comment type="similarity">
    <text evidence="1">Belongs to the YbaB/EbfC family.</text>
</comment>
<name>Y1847_SYNY3</name>